<proteinExistence type="inferred from homology"/>
<protein>
    <recommendedName>
        <fullName evidence="1">Small ribosomal subunit protein uS11</fullName>
    </recommendedName>
    <alternativeName>
        <fullName evidence="2">30S ribosomal protein S11</fullName>
    </alternativeName>
</protein>
<evidence type="ECO:0000255" key="1">
    <source>
        <dbReference type="HAMAP-Rule" id="MF_01310"/>
    </source>
</evidence>
<evidence type="ECO:0000305" key="2"/>
<accession>Q49ZE3</accession>
<feature type="chain" id="PRO_0000123227" description="Small ribosomal subunit protein uS11">
    <location>
        <begin position="1"/>
        <end position="129"/>
    </location>
</feature>
<name>RS11_STAS1</name>
<reference key="1">
    <citation type="journal article" date="2005" name="Proc. Natl. Acad. Sci. U.S.A.">
        <title>Whole genome sequence of Staphylococcus saprophyticus reveals the pathogenesis of uncomplicated urinary tract infection.</title>
        <authorList>
            <person name="Kuroda M."/>
            <person name="Yamashita A."/>
            <person name="Hirakawa H."/>
            <person name="Kumano M."/>
            <person name="Morikawa K."/>
            <person name="Higashide M."/>
            <person name="Maruyama A."/>
            <person name="Inose Y."/>
            <person name="Matoba K."/>
            <person name="Toh H."/>
            <person name="Kuhara S."/>
            <person name="Hattori M."/>
            <person name="Ohta T."/>
        </authorList>
    </citation>
    <scope>NUCLEOTIDE SEQUENCE [LARGE SCALE GENOMIC DNA]</scope>
    <source>
        <strain>ATCC 15305 / DSM 20229 / NCIMB 8711 / NCTC 7292 / S-41</strain>
    </source>
</reference>
<comment type="function">
    <text evidence="1">Located on the platform of the 30S subunit, it bridges several disparate RNA helices of the 16S rRNA. Forms part of the Shine-Dalgarno cleft in the 70S ribosome.</text>
</comment>
<comment type="subunit">
    <text evidence="1">Part of the 30S ribosomal subunit. Interacts with proteins S7 and S18. Binds to IF-3.</text>
</comment>
<comment type="similarity">
    <text evidence="1">Belongs to the universal ribosomal protein uS11 family.</text>
</comment>
<sequence length="129" mass="13882">MARKQVSRKRRVKKNIENGVAHIRSTFNNTIVTITDEFGNALSWSSAGALGFKGSKKSTPFAAQMASETASKTAMEHGLKSVEVTVKGPGPGRESAIRALQSAGLEVTAIRDVTPVPHNGCRPPKRRRV</sequence>
<organism>
    <name type="scientific">Staphylococcus saprophyticus subsp. saprophyticus (strain ATCC 15305 / DSM 20229 / NCIMB 8711 / NCTC 7292 / S-41)</name>
    <dbReference type="NCBI Taxonomy" id="342451"/>
    <lineage>
        <taxon>Bacteria</taxon>
        <taxon>Bacillati</taxon>
        <taxon>Bacillota</taxon>
        <taxon>Bacilli</taxon>
        <taxon>Bacillales</taxon>
        <taxon>Staphylococcaceae</taxon>
        <taxon>Staphylococcus</taxon>
    </lineage>
</organism>
<keyword id="KW-1185">Reference proteome</keyword>
<keyword id="KW-0687">Ribonucleoprotein</keyword>
<keyword id="KW-0689">Ribosomal protein</keyword>
<keyword id="KW-0694">RNA-binding</keyword>
<keyword id="KW-0699">rRNA-binding</keyword>
<dbReference type="EMBL" id="AP008934">
    <property type="protein sequence ID" value="BAE17833.1"/>
    <property type="molecule type" value="Genomic_DNA"/>
</dbReference>
<dbReference type="RefSeq" id="WP_002482636.1">
    <property type="nucleotide sequence ID" value="NZ_MTGA01000036.1"/>
</dbReference>
<dbReference type="SMR" id="Q49ZE3"/>
<dbReference type="GeneID" id="97227405"/>
<dbReference type="KEGG" id="ssp:SSP0688"/>
<dbReference type="eggNOG" id="COG0100">
    <property type="taxonomic scope" value="Bacteria"/>
</dbReference>
<dbReference type="HOGENOM" id="CLU_072439_5_0_9"/>
<dbReference type="OrthoDB" id="9806415at2"/>
<dbReference type="Proteomes" id="UP000006371">
    <property type="component" value="Chromosome"/>
</dbReference>
<dbReference type="GO" id="GO:1990904">
    <property type="term" value="C:ribonucleoprotein complex"/>
    <property type="evidence" value="ECO:0007669"/>
    <property type="project" value="UniProtKB-KW"/>
</dbReference>
<dbReference type="GO" id="GO:0005840">
    <property type="term" value="C:ribosome"/>
    <property type="evidence" value="ECO:0007669"/>
    <property type="project" value="UniProtKB-KW"/>
</dbReference>
<dbReference type="GO" id="GO:0019843">
    <property type="term" value="F:rRNA binding"/>
    <property type="evidence" value="ECO:0007669"/>
    <property type="project" value="UniProtKB-UniRule"/>
</dbReference>
<dbReference type="GO" id="GO:0003735">
    <property type="term" value="F:structural constituent of ribosome"/>
    <property type="evidence" value="ECO:0007669"/>
    <property type="project" value="InterPro"/>
</dbReference>
<dbReference type="GO" id="GO:0006412">
    <property type="term" value="P:translation"/>
    <property type="evidence" value="ECO:0007669"/>
    <property type="project" value="UniProtKB-UniRule"/>
</dbReference>
<dbReference type="FunFam" id="3.30.420.80:FF:000001">
    <property type="entry name" value="30S ribosomal protein S11"/>
    <property type="match status" value="1"/>
</dbReference>
<dbReference type="Gene3D" id="3.30.420.80">
    <property type="entry name" value="Ribosomal protein S11"/>
    <property type="match status" value="1"/>
</dbReference>
<dbReference type="HAMAP" id="MF_01310">
    <property type="entry name" value="Ribosomal_uS11"/>
    <property type="match status" value="1"/>
</dbReference>
<dbReference type="InterPro" id="IPR001971">
    <property type="entry name" value="Ribosomal_uS11"/>
</dbReference>
<dbReference type="InterPro" id="IPR019981">
    <property type="entry name" value="Ribosomal_uS11_bac-type"/>
</dbReference>
<dbReference type="InterPro" id="IPR018102">
    <property type="entry name" value="Ribosomal_uS11_CS"/>
</dbReference>
<dbReference type="InterPro" id="IPR036967">
    <property type="entry name" value="Ribosomal_uS11_sf"/>
</dbReference>
<dbReference type="NCBIfam" id="NF003698">
    <property type="entry name" value="PRK05309.1"/>
    <property type="match status" value="1"/>
</dbReference>
<dbReference type="NCBIfam" id="TIGR03632">
    <property type="entry name" value="uS11_bact"/>
    <property type="match status" value="1"/>
</dbReference>
<dbReference type="PANTHER" id="PTHR11759">
    <property type="entry name" value="40S RIBOSOMAL PROTEIN S14/30S RIBOSOMAL PROTEIN S11"/>
    <property type="match status" value="1"/>
</dbReference>
<dbReference type="Pfam" id="PF00411">
    <property type="entry name" value="Ribosomal_S11"/>
    <property type="match status" value="1"/>
</dbReference>
<dbReference type="PIRSF" id="PIRSF002131">
    <property type="entry name" value="Ribosomal_S11"/>
    <property type="match status" value="1"/>
</dbReference>
<dbReference type="SUPFAM" id="SSF53137">
    <property type="entry name" value="Translational machinery components"/>
    <property type="match status" value="1"/>
</dbReference>
<dbReference type="PROSITE" id="PS00054">
    <property type="entry name" value="RIBOSOMAL_S11"/>
    <property type="match status" value="1"/>
</dbReference>
<gene>
    <name evidence="1" type="primary">rpsK</name>
    <name type="ordered locus">SSP0688</name>
</gene>